<proteinExistence type="inferred from homology"/>
<sequence>MQQTKKLTHSDITIAVMSGPFLQRGEPALVSKWYRTKMALACGVDLVVELPYAFSTQKAETFANGAISILNALHVSEICFGSEDGQIENFYNTVSAQKNEEETFNRLVKQFMNAGNSYAKATSEAFLHILSSEKNIDMSQPNNILGFQYIKAILMQNSSMQAQTIKRFASHYHDETFNDQHIASATSIRKQLFSENSSFTEIESFIPKATASLLASYKQNYGTLHNWEQYFSFFKYKLMTMSPEDLRHIYEIEEGLEHRILSKIQTSSSFHLFMEALKTKRYTWTRLQRACTHILTNTTKEEIHCANIEQHAPYIRLLGMSQKGQTYLSKNKKKIELPILTHTKTFDHPTLHIERKANSVYFSIMKEPLRTQLLKRDATHHPIRYDETTAKFL</sequence>
<gene>
    <name evidence="1" type="primary">tmcAL</name>
    <name type="ordered locus">BALH_3554</name>
</gene>
<reference key="1">
    <citation type="journal article" date="2007" name="J. Bacteriol.">
        <title>The complete genome sequence of Bacillus thuringiensis Al Hakam.</title>
        <authorList>
            <person name="Challacombe J.F."/>
            <person name="Altherr M.R."/>
            <person name="Xie G."/>
            <person name="Bhotika S.S."/>
            <person name="Brown N."/>
            <person name="Bruce D."/>
            <person name="Campbell C.S."/>
            <person name="Campbell M.L."/>
            <person name="Chen J."/>
            <person name="Chertkov O."/>
            <person name="Cleland C."/>
            <person name="Dimitrijevic M."/>
            <person name="Doggett N.A."/>
            <person name="Fawcett J.J."/>
            <person name="Glavina T."/>
            <person name="Goodwin L.A."/>
            <person name="Green L.D."/>
            <person name="Han C.S."/>
            <person name="Hill K.K."/>
            <person name="Hitchcock P."/>
            <person name="Jackson P.J."/>
            <person name="Keim P."/>
            <person name="Kewalramani A.R."/>
            <person name="Longmire J."/>
            <person name="Lucas S."/>
            <person name="Malfatti S."/>
            <person name="Martinez D."/>
            <person name="McMurry K."/>
            <person name="Meincke L.J."/>
            <person name="Misra M."/>
            <person name="Moseman B.L."/>
            <person name="Mundt M."/>
            <person name="Munk A.C."/>
            <person name="Okinaka R.T."/>
            <person name="Parson-Quintana B."/>
            <person name="Reilly L.P."/>
            <person name="Richardson P."/>
            <person name="Robinson D.L."/>
            <person name="Saunders E."/>
            <person name="Tapia R."/>
            <person name="Tesmer J.G."/>
            <person name="Thayer N."/>
            <person name="Thompson L.S."/>
            <person name="Tice H."/>
            <person name="Ticknor L.O."/>
            <person name="Wills P.L."/>
            <person name="Gilna P."/>
            <person name="Brettin T.S."/>
        </authorList>
    </citation>
    <scope>NUCLEOTIDE SEQUENCE [LARGE SCALE GENOMIC DNA]</scope>
    <source>
        <strain>Al Hakam</strain>
    </source>
</reference>
<comment type="function">
    <text evidence="1">Catalyzes the formation of N(4)-acetylcytidine (ac(4)C) at the wobble position of elongator tRNA(Met), using acetate and ATP as substrates. First activates an acetate ion to form acetyladenylate (Ac-AMP) and then transfers the acetyl group to tRNA to form ac(4)C34.</text>
</comment>
<comment type="catalytic activity">
    <reaction evidence="1">
        <text>cytidine(34) in elongator tRNA(Met) + acetate + ATP = N(4)-acetylcytidine(34) in elongator tRNA(Met) + AMP + diphosphate</text>
        <dbReference type="Rhea" id="RHEA:58144"/>
        <dbReference type="Rhea" id="RHEA-COMP:10693"/>
        <dbReference type="Rhea" id="RHEA-COMP:10694"/>
        <dbReference type="ChEBI" id="CHEBI:30089"/>
        <dbReference type="ChEBI" id="CHEBI:30616"/>
        <dbReference type="ChEBI" id="CHEBI:33019"/>
        <dbReference type="ChEBI" id="CHEBI:74900"/>
        <dbReference type="ChEBI" id="CHEBI:82748"/>
        <dbReference type="ChEBI" id="CHEBI:456215"/>
    </reaction>
</comment>
<comment type="subcellular location">
    <subcellularLocation>
        <location evidence="1">Cytoplasm</location>
    </subcellularLocation>
</comment>
<comment type="similarity">
    <text evidence="1">Belongs to the TmcAL family.</text>
</comment>
<protein>
    <recommendedName>
        <fullName evidence="1">tRNA(Met) cytidine acetate ligase</fullName>
        <ecNumber evidence="1">6.3.4.-</ecNumber>
    </recommendedName>
</protein>
<evidence type="ECO:0000255" key="1">
    <source>
        <dbReference type="HAMAP-Rule" id="MF_01539"/>
    </source>
</evidence>
<name>TMCAL_BACAH</name>
<dbReference type="EC" id="6.3.4.-" evidence="1"/>
<dbReference type="EMBL" id="CP000485">
    <property type="protein sequence ID" value="ABK86788.1"/>
    <property type="molecule type" value="Genomic_DNA"/>
</dbReference>
<dbReference type="SMR" id="A0RHU5"/>
<dbReference type="KEGG" id="btl:BALH_3554"/>
<dbReference type="HOGENOM" id="CLU_038915_0_2_9"/>
<dbReference type="GO" id="GO:0005737">
    <property type="term" value="C:cytoplasm"/>
    <property type="evidence" value="ECO:0007669"/>
    <property type="project" value="UniProtKB-SubCell"/>
</dbReference>
<dbReference type="GO" id="GO:0005524">
    <property type="term" value="F:ATP binding"/>
    <property type="evidence" value="ECO:0007669"/>
    <property type="project" value="UniProtKB-KW"/>
</dbReference>
<dbReference type="GO" id="GO:0016879">
    <property type="term" value="F:ligase activity, forming carbon-nitrogen bonds"/>
    <property type="evidence" value="ECO:0007669"/>
    <property type="project" value="UniProtKB-UniRule"/>
</dbReference>
<dbReference type="GO" id="GO:0000049">
    <property type="term" value="F:tRNA binding"/>
    <property type="evidence" value="ECO:0007669"/>
    <property type="project" value="UniProtKB-KW"/>
</dbReference>
<dbReference type="GO" id="GO:0006400">
    <property type="term" value="P:tRNA modification"/>
    <property type="evidence" value="ECO:0007669"/>
    <property type="project" value="UniProtKB-UniRule"/>
</dbReference>
<dbReference type="Gene3D" id="3.40.50.620">
    <property type="entry name" value="HUPs"/>
    <property type="match status" value="1"/>
</dbReference>
<dbReference type="HAMAP" id="MF_01539">
    <property type="entry name" value="TmcAL"/>
    <property type="match status" value="1"/>
</dbReference>
<dbReference type="InterPro" id="IPR014729">
    <property type="entry name" value="Rossmann-like_a/b/a_fold"/>
</dbReference>
<dbReference type="InterPro" id="IPR008513">
    <property type="entry name" value="tRNA(Met)_cyd_acetate_ligase"/>
</dbReference>
<dbReference type="NCBIfam" id="NF010191">
    <property type="entry name" value="PRK13670.1"/>
    <property type="match status" value="1"/>
</dbReference>
<dbReference type="PANTHER" id="PTHR37825">
    <property type="entry name" value="TRNA(MET) CYTIDINE ACETATE LIGASE"/>
    <property type="match status" value="1"/>
</dbReference>
<dbReference type="PANTHER" id="PTHR37825:SF1">
    <property type="entry name" value="TRNA(MET) CYTIDINE ACETATE LIGASE"/>
    <property type="match status" value="1"/>
</dbReference>
<dbReference type="Pfam" id="PF05636">
    <property type="entry name" value="HIGH_NTase1"/>
    <property type="match status" value="1"/>
</dbReference>
<dbReference type="SUPFAM" id="SSF52374">
    <property type="entry name" value="Nucleotidylyl transferase"/>
    <property type="match status" value="1"/>
</dbReference>
<keyword id="KW-0067">ATP-binding</keyword>
<keyword id="KW-0963">Cytoplasm</keyword>
<keyword id="KW-0436">Ligase</keyword>
<keyword id="KW-0547">Nucleotide-binding</keyword>
<keyword id="KW-0694">RNA-binding</keyword>
<keyword id="KW-0819">tRNA processing</keyword>
<keyword id="KW-0820">tRNA-binding</keyword>
<accession>A0RHU5</accession>
<feature type="chain" id="PRO_0000300166" description="tRNA(Met) cytidine acetate ligase">
    <location>
        <begin position="1"/>
        <end position="393"/>
    </location>
</feature>
<feature type="binding site" evidence="1">
    <location>
        <position position="81"/>
    </location>
    <ligand>
        <name>ATP</name>
        <dbReference type="ChEBI" id="CHEBI:30616"/>
    </ligand>
</feature>
<feature type="binding site" evidence="1">
    <location>
        <position position="142"/>
    </location>
    <ligand>
        <name>ATP</name>
        <dbReference type="ChEBI" id="CHEBI:30616"/>
    </ligand>
</feature>
<feature type="binding site" evidence="1">
    <location>
        <position position="167"/>
    </location>
    <ligand>
        <name>ATP</name>
        <dbReference type="ChEBI" id="CHEBI:30616"/>
    </ligand>
</feature>
<organism>
    <name type="scientific">Bacillus thuringiensis (strain Al Hakam)</name>
    <dbReference type="NCBI Taxonomy" id="412694"/>
    <lineage>
        <taxon>Bacteria</taxon>
        <taxon>Bacillati</taxon>
        <taxon>Bacillota</taxon>
        <taxon>Bacilli</taxon>
        <taxon>Bacillales</taxon>
        <taxon>Bacillaceae</taxon>
        <taxon>Bacillus</taxon>
        <taxon>Bacillus cereus group</taxon>
    </lineage>
</organism>